<comment type="function">
    <text evidence="1">This protein binds to the 23S rRNA, and is important in its secondary structure. It is located near the subunit interface in the base of the L7/L12 stalk, and near the tRNA binding site of the peptidyltransferase center.</text>
</comment>
<comment type="subunit">
    <text evidence="1">Part of the 50S ribosomal subunit.</text>
</comment>
<comment type="similarity">
    <text evidence="1">Belongs to the universal ribosomal protein uL6 family.</text>
</comment>
<proteinExistence type="inferred from homology"/>
<dbReference type="EMBL" id="CP001291">
    <property type="protein sequence ID" value="ACK72098.1"/>
    <property type="molecule type" value="Genomic_DNA"/>
</dbReference>
<dbReference type="RefSeq" id="WP_015955691.1">
    <property type="nucleotide sequence ID" value="NC_011729.1"/>
</dbReference>
<dbReference type="SMR" id="B7KI01"/>
<dbReference type="STRING" id="65393.PCC7424_3717"/>
<dbReference type="KEGG" id="cyc:PCC7424_3717"/>
<dbReference type="eggNOG" id="COG0097">
    <property type="taxonomic scope" value="Bacteria"/>
</dbReference>
<dbReference type="HOGENOM" id="CLU_065464_1_2_3"/>
<dbReference type="OrthoDB" id="9805007at2"/>
<dbReference type="Proteomes" id="UP000002384">
    <property type="component" value="Chromosome"/>
</dbReference>
<dbReference type="GO" id="GO:0022625">
    <property type="term" value="C:cytosolic large ribosomal subunit"/>
    <property type="evidence" value="ECO:0007669"/>
    <property type="project" value="TreeGrafter"/>
</dbReference>
<dbReference type="GO" id="GO:0019843">
    <property type="term" value="F:rRNA binding"/>
    <property type="evidence" value="ECO:0007669"/>
    <property type="project" value="UniProtKB-UniRule"/>
</dbReference>
<dbReference type="GO" id="GO:0003735">
    <property type="term" value="F:structural constituent of ribosome"/>
    <property type="evidence" value="ECO:0007669"/>
    <property type="project" value="InterPro"/>
</dbReference>
<dbReference type="GO" id="GO:0002181">
    <property type="term" value="P:cytoplasmic translation"/>
    <property type="evidence" value="ECO:0007669"/>
    <property type="project" value="TreeGrafter"/>
</dbReference>
<dbReference type="FunFam" id="3.90.930.12:FF:000001">
    <property type="entry name" value="50S ribosomal protein L6"/>
    <property type="match status" value="1"/>
</dbReference>
<dbReference type="FunFam" id="3.90.930.12:FF:000002">
    <property type="entry name" value="50S ribosomal protein L6"/>
    <property type="match status" value="1"/>
</dbReference>
<dbReference type="Gene3D" id="3.90.930.12">
    <property type="entry name" value="Ribosomal protein L6, alpha-beta domain"/>
    <property type="match status" value="2"/>
</dbReference>
<dbReference type="HAMAP" id="MF_01365_B">
    <property type="entry name" value="Ribosomal_uL6_B"/>
    <property type="match status" value="1"/>
</dbReference>
<dbReference type="InterPro" id="IPR000702">
    <property type="entry name" value="Ribosomal_uL6-like"/>
</dbReference>
<dbReference type="InterPro" id="IPR036789">
    <property type="entry name" value="Ribosomal_uL6-like_a/b-dom_sf"/>
</dbReference>
<dbReference type="InterPro" id="IPR020040">
    <property type="entry name" value="Ribosomal_uL6_a/b-dom"/>
</dbReference>
<dbReference type="InterPro" id="IPR019906">
    <property type="entry name" value="Ribosomal_uL6_bac-type"/>
</dbReference>
<dbReference type="InterPro" id="IPR002358">
    <property type="entry name" value="Ribosomal_uL6_CS"/>
</dbReference>
<dbReference type="NCBIfam" id="TIGR03654">
    <property type="entry name" value="L6_bact"/>
    <property type="match status" value="1"/>
</dbReference>
<dbReference type="PANTHER" id="PTHR11655">
    <property type="entry name" value="60S/50S RIBOSOMAL PROTEIN L6/L9"/>
    <property type="match status" value="1"/>
</dbReference>
<dbReference type="PANTHER" id="PTHR11655:SF14">
    <property type="entry name" value="LARGE RIBOSOMAL SUBUNIT PROTEIN UL6M"/>
    <property type="match status" value="1"/>
</dbReference>
<dbReference type="Pfam" id="PF00347">
    <property type="entry name" value="Ribosomal_L6"/>
    <property type="match status" value="2"/>
</dbReference>
<dbReference type="PIRSF" id="PIRSF002162">
    <property type="entry name" value="Ribosomal_L6"/>
    <property type="match status" value="1"/>
</dbReference>
<dbReference type="PRINTS" id="PR00059">
    <property type="entry name" value="RIBOSOMALL6"/>
</dbReference>
<dbReference type="SUPFAM" id="SSF56053">
    <property type="entry name" value="Ribosomal protein L6"/>
    <property type="match status" value="2"/>
</dbReference>
<dbReference type="PROSITE" id="PS00525">
    <property type="entry name" value="RIBOSOMAL_L6_1"/>
    <property type="match status" value="1"/>
</dbReference>
<sequence length="179" mass="19482">MSRIGKRPITIPNKVTVNIDGSHVAVKGPKGELQRTLPTLVIVEQDEGVLRVVRQDDSRTARQRHGLCRTLVSNMVEGVSKGFEKRLEIQGVGYRAAAQGSKLTLNVGYSKPVEMDMPSGIGVAVEKNTEITITGIDKEIVGNVAAKIRAVRPPEPYKGKGIRYKGEVVRRKAGKTGKK</sequence>
<feature type="chain" id="PRO_1000143972" description="Large ribosomal subunit protein uL6">
    <location>
        <begin position="1"/>
        <end position="179"/>
    </location>
</feature>
<accession>B7KI01</accession>
<reference key="1">
    <citation type="journal article" date="2011" name="MBio">
        <title>Novel metabolic attributes of the genus Cyanothece, comprising a group of unicellular nitrogen-fixing Cyanobacteria.</title>
        <authorList>
            <person name="Bandyopadhyay A."/>
            <person name="Elvitigala T."/>
            <person name="Welsh E."/>
            <person name="Stockel J."/>
            <person name="Liberton M."/>
            <person name="Min H."/>
            <person name="Sherman L.A."/>
            <person name="Pakrasi H.B."/>
        </authorList>
    </citation>
    <scope>NUCLEOTIDE SEQUENCE [LARGE SCALE GENOMIC DNA]</scope>
    <source>
        <strain>PCC 7424</strain>
    </source>
</reference>
<gene>
    <name evidence="1" type="primary">rplF</name>
    <name evidence="1" type="synonym">rpl6</name>
    <name type="ordered locus">PCC7424_3717</name>
</gene>
<organism>
    <name type="scientific">Gloeothece citriformis (strain PCC 7424)</name>
    <name type="common">Cyanothece sp. (strain PCC 7424)</name>
    <dbReference type="NCBI Taxonomy" id="65393"/>
    <lineage>
        <taxon>Bacteria</taxon>
        <taxon>Bacillati</taxon>
        <taxon>Cyanobacteriota</taxon>
        <taxon>Cyanophyceae</taxon>
        <taxon>Oscillatoriophycideae</taxon>
        <taxon>Chroococcales</taxon>
        <taxon>Aphanothecaceae</taxon>
        <taxon>Gloeothece</taxon>
        <taxon>Gloeothece citriformis</taxon>
    </lineage>
</organism>
<protein>
    <recommendedName>
        <fullName evidence="1">Large ribosomal subunit protein uL6</fullName>
    </recommendedName>
    <alternativeName>
        <fullName evidence="2">50S ribosomal protein L6</fullName>
    </alternativeName>
</protein>
<keyword id="KW-1185">Reference proteome</keyword>
<keyword id="KW-0687">Ribonucleoprotein</keyword>
<keyword id="KW-0689">Ribosomal protein</keyword>
<keyword id="KW-0694">RNA-binding</keyword>
<keyword id="KW-0699">rRNA-binding</keyword>
<evidence type="ECO:0000255" key="1">
    <source>
        <dbReference type="HAMAP-Rule" id="MF_01365"/>
    </source>
</evidence>
<evidence type="ECO:0000305" key="2"/>
<name>RL6_GLOC7</name>